<comment type="function">
    <text evidence="1">Catalyzes the conversion of 4-hydroxy-tetrahydrodipicolinate (HTPA) to tetrahydrodipicolinate.</text>
</comment>
<comment type="catalytic activity">
    <reaction evidence="1">
        <text>(S)-2,3,4,5-tetrahydrodipicolinate + NAD(+) + H2O = (2S,4S)-4-hydroxy-2,3,4,5-tetrahydrodipicolinate + NADH + H(+)</text>
        <dbReference type="Rhea" id="RHEA:35323"/>
        <dbReference type="ChEBI" id="CHEBI:15377"/>
        <dbReference type="ChEBI" id="CHEBI:15378"/>
        <dbReference type="ChEBI" id="CHEBI:16845"/>
        <dbReference type="ChEBI" id="CHEBI:57540"/>
        <dbReference type="ChEBI" id="CHEBI:57945"/>
        <dbReference type="ChEBI" id="CHEBI:67139"/>
        <dbReference type="EC" id="1.17.1.8"/>
    </reaction>
</comment>
<comment type="catalytic activity">
    <reaction evidence="1">
        <text>(S)-2,3,4,5-tetrahydrodipicolinate + NADP(+) + H2O = (2S,4S)-4-hydroxy-2,3,4,5-tetrahydrodipicolinate + NADPH + H(+)</text>
        <dbReference type="Rhea" id="RHEA:35331"/>
        <dbReference type="ChEBI" id="CHEBI:15377"/>
        <dbReference type="ChEBI" id="CHEBI:15378"/>
        <dbReference type="ChEBI" id="CHEBI:16845"/>
        <dbReference type="ChEBI" id="CHEBI:57783"/>
        <dbReference type="ChEBI" id="CHEBI:58349"/>
        <dbReference type="ChEBI" id="CHEBI:67139"/>
        <dbReference type="EC" id="1.17.1.8"/>
    </reaction>
</comment>
<comment type="pathway">
    <text evidence="1">Amino-acid biosynthesis; L-lysine biosynthesis via DAP pathway; (S)-tetrahydrodipicolinate from L-aspartate: step 4/4.</text>
</comment>
<comment type="subcellular location">
    <subcellularLocation>
        <location evidence="1">Cytoplasm</location>
    </subcellularLocation>
</comment>
<comment type="similarity">
    <text evidence="1">Belongs to the DapB family.</text>
</comment>
<comment type="caution">
    <text evidence="2">Was originally thought to be a dihydrodipicolinate reductase (DHDPR), catalyzing the conversion of dihydrodipicolinate to tetrahydrodipicolinate. However, it was shown in E.coli that the substrate of the enzymatic reaction is not dihydrodipicolinate (DHDP) but in fact (2S,4S)-4-hydroxy-2,3,4,5-tetrahydrodipicolinic acid (HTPA), the product released by the DapA-catalyzed reaction.</text>
</comment>
<sequence length="263" mass="27585">MINAGVTGASGRMGKLIIENIIKMEGIQLSSAFDLMNIGKDVGEVAQTGKLDVNISDVADMATVLKESKTNVVIDFTIAPATVANAPVVAGAGVDLIIGTTGFSDEQRATIEGAIIKNGTSAVISPNYSVGVNVFFKILQETAKYLSEYDIEIIEAHHNQKKDAPSGTAMKAAEVISETLGGKDFVYGREGLAPRDKEIGIHAVRGGDIVGDHTVLFAGDGERIEIKHQAHSRNAFASGAVKAAIWINNAGPGIHTMDDILGS</sequence>
<reference key="1">
    <citation type="journal article" date="2009" name="ISME J.">
        <title>The genome sequence of the psychrophilic archaeon, Methanococcoides burtonii: the role of genome evolution in cold adaptation.</title>
        <authorList>
            <person name="Allen M.A."/>
            <person name="Lauro F.M."/>
            <person name="Williams T.J."/>
            <person name="Burg D."/>
            <person name="Siddiqui K.S."/>
            <person name="De Francisci D."/>
            <person name="Chong K.W."/>
            <person name="Pilak O."/>
            <person name="Chew H.H."/>
            <person name="De Maere M.Z."/>
            <person name="Ting L."/>
            <person name="Katrib M."/>
            <person name="Ng C."/>
            <person name="Sowers K.R."/>
            <person name="Galperin M.Y."/>
            <person name="Anderson I.J."/>
            <person name="Ivanova N."/>
            <person name="Dalin E."/>
            <person name="Martinez M."/>
            <person name="Lapidus A."/>
            <person name="Hauser L."/>
            <person name="Land M."/>
            <person name="Thomas T."/>
            <person name="Cavicchioli R."/>
        </authorList>
    </citation>
    <scope>NUCLEOTIDE SEQUENCE [LARGE SCALE GENOMIC DNA]</scope>
    <source>
        <strain>DSM 6242 / NBRC 107633 / OCM 468 / ACE-M</strain>
    </source>
</reference>
<organism>
    <name type="scientific">Methanococcoides burtonii (strain DSM 6242 / NBRC 107633 / OCM 468 / ACE-M)</name>
    <dbReference type="NCBI Taxonomy" id="259564"/>
    <lineage>
        <taxon>Archaea</taxon>
        <taxon>Methanobacteriati</taxon>
        <taxon>Methanobacteriota</taxon>
        <taxon>Stenosarchaea group</taxon>
        <taxon>Methanomicrobia</taxon>
        <taxon>Methanosarcinales</taxon>
        <taxon>Methanosarcinaceae</taxon>
        <taxon>Methanococcoides</taxon>
    </lineage>
</organism>
<accession>Q12ZG1</accession>
<protein>
    <recommendedName>
        <fullName evidence="1">4-hydroxy-tetrahydrodipicolinate reductase</fullName>
        <shortName evidence="1">HTPA reductase</shortName>
        <ecNumber evidence="1">1.17.1.8</ecNumber>
    </recommendedName>
</protein>
<proteinExistence type="inferred from homology"/>
<evidence type="ECO:0000255" key="1">
    <source>
        <dbReference type="HAMAP-Rule" id="MF_00102"/>
    </source>
</evidence>
<evidence type="ECO:0000305" key="2"/>
<keyword id="KW-0028">Amino-acid biosynthesis</keyword>
<keyword id="KW-0963">Cytoplasm</keyword>
<keyword id="KW-0220">Diaminopimelate biosynthesis</keyword>
<keyword id="KW-0457">Lysine biosynthesis</keyword>
<keyword id="KW-0520">NAD</keyword>
<keyword id="KW-0521">NADP</keyword>
<keyword id="KW-0560">Oxidoreductase</keyword>
<name>DAPB_METBU</name>
<dbReference type="EC" id="1.17.1.8" evidence="1"/>
<dbReference type="EMBL" id="CP000300">
    <property type="protein sequence ID" value="ABE51165.1"/>
    <property type="molecule type" value="Genomic_DNA"/>
</dbReference>
<dbReference type="RefSeq" id="WP_011498329.1">
    <property type="nucleotide sequence ID" value="NC_007955.1"/>
</dbReference>
<dbReference type="SMR" id="Q12ZG1"/>
<dbReference type="STRING" id="259564.Mbur_0148"/>
<dbReference type="GeneID" id="3998414"/>
<dbReference type="KEGG" id="mbu:Mbur_0148"/>
<dbReference type="HOGENOM" id="CLU_047479_2_1_2"/>
<dbReference type="OrthoDB" id="195035at2157"/>
<dbReference type="UniPathway" id="UPA00034">
    <property type="reaction ID" value="UER00018"/>
</dbReference>
<dbReference type="Proteomes" id="UP000001979">
    <property type="component" value="Chromosome"/>
</dbReference>
<dbReference type="GO" id="GO:0005737">
    <property type="term" value="C:cytoplasm"/>
    <property type="evidence" value="ECO:0007669"/>
    <property type="project" value="UniProtKB-SubCell"/>
</dbReference>
<dbReference type="GO" id="GO:0008839">
    <property type="term" value="F:4-hydroxy-tetrahydrodipicolinate reductase"/>
    <property type="evidence" value="ECO:0007669"/>
    <property type="project" value="UniProtKB-EC"/>
</dbReference>
<dbReference type="GO" id="GO:0051287">
    <property type="term" value="F:NAD binding"/>
    <property type="evidence" value="ECO:0007669"/>
    <property type="project" value="UniProtKB-UniRule"/>
</dbReference>
<dbReference type="GO" id="GO:0050661">
    <property type="term" value="F:NADP binding"/>
    <property type="evidence" value="ECO:0007669"/>
    <property type="project" value="UniProtKB-UniRule"/>
</dbReference>
<dbReference type="GO" id="GO:0016726">
    <property type="term" value="F:oxidoreductase activity, acting on CH or CH2 groups, NAD or NADP as acceptor"/>
    <property type="evidence" value="ECO:0007669"/>
    <property type="project" value="UniProtKB-UniRule"/>
</dbReference>
<dbReference type="GO" id="GO:0019877">
    <property type="term" value="P:diaminopimelate biosynthetic process"/>
    <property type="evidence" value="ECO:0007669"/>
    <property type="project" value="UniProtKB-UniRule"/>
</dbReference>
<dbReference type="GO" id="GO:0009089">
    <property type="term" value="P:lysine biosynthetic process via diaminopimelate"/>
    <property type="evidence" value="ECO:0007669"/>
    <property type="project" value="UniProtKB-UniRule"/>
</dbReference>
<dbReference type="CDD" id="cd02274">
    <property type="entry name" value="DHDPR_N"/>
    <property type="match status" value="1"/>
</dbReference>
<dbReference type="FunFam" id="3.30.360.10:FF:000004">
    <property type="entry name" value="4-hydroxy-tetrahydrodipicolinate reductase"/>
    <property type="match status" value="1"/>
</dbReference>
<dbReference type="Gene3D" id="3.30.360.10">
    <property type="entry name" value="Dihydrodipicolinate Reductase, domain 2"/>
    <property type="match status" value="1"/>
</dbReference>
<dbReference type="Gene3D" id="3.40.50.720">
    <property type="entry name" value="NAD(P)-binding Rossmann-like Domain"/>
    <property type="match status" value="1"/>
</dbReference>
<dbReference type="HAMAP" id="MF_00102">
    <property type="entry name" value="DapB"/>
    <property type="match status" value="1"/>
</dbReference>
<dbReference type="InterPro" id="IPR022663">
    <property type="entry name" value="DapB_C"/>
</dbReference>
<dbReference type="InterPro" id="IPR000846">
    <property type="entry name" value="DapB_N"/>
</dbReference>
<dbReference type="InterPro" id="IPR022664">
    <property type="entry name" value="DapB_N_CS"/>
</dbReference>
<dbReference type="InterPro" id="IPR023940">
    <property type="entry name" value="DHDPR_bac"/>
</dbReference>
<dbReference type="InterPro" id="IPR036291">
    <property type="entry name" value="NAD(P)-bd_dom_sf"/>
</dbReference>
<dbReference type="NCBIfam" id="TIGR00036">
    <property type="entry name" value="dapB"/>
    <property type="match status" value="1"/>
</dbReference>
<dbReference type="PANTHER" id="PTHR20836:SF0">
    <property type="entry name" value="4-HYDROXY-TETRAHYDRODIPICOLINATE REDUCTASE 1, CHLOROPLASTIC-RELATED"/>
    <property type="match status" value="1"/>
</dbReference>
<dbReference type="PANTHER" id="PTHR20836">
    <property type="entry name" value="DIHYDRODIPICOLINATE REDUCTASE"/>
    <property type="match status" value="1"/>
</dbReference>
<dbReference type="Pfam" id="PF05173">
    <property type="entry name" value="DapB_C"/>
    <property type="match status" value="1"/>
</dbReference>
<dbReference type="Pfam" id="PF01113">
    <property type="entry name" value="DapB_N"/>
    <property type="match status" value="1"/>
</dbReference>
<dbReference type="PIRSF" id="PIRSF000161">
    <property type="entry name" value="DHPR"/>
    <property type="match status" value="1"/>
</dbReference>
<dbReference type="SUPFAM" id="SSF55347">
    <property type="entry name" value="Glyceraldehyde-3-phosphate dehydrogenase-like, C-terminal domain"/>
    <property type="match status" value="1"/>
</dbReference>
<dbReference type="SUPFAM" id="SSF51735">
    <property type="entry name" value="NAD(P)-binding Rossmann-fold domains"/>
    <property type="match status" value="1"/>
</dbReference>
<dbReference type="PROSITE" id="PS01298">
    <property type="entry name" value="DAPB"/>
    <property type="match status" value="1"/>
</dbReference>
<gene>
    <name evidence="1" type="primary">dapB</name>
    <name type="ordered locus">Mbur_0148</name>
</gene>
<feature type="chain" id="PRO_1000008586" description="4-hydroxy-tetrahydrodipicolinate reductase">
    <location>
        <begin position="1"/>
        <end position="263"/>
    </location>
</feature>
<feature type="active site" description="Proton donor/acceptor" evidence="1">
    <location>
        <position position="157"/>
    </location>
</feature>
<feature type="active site" description="Proton donor" evidence="1">
    <location>
        <position position="161"/>
    </location>
</feature>
<feature type="binding site" evidence="1">
    <location>
        <begin position="8"/>
        <end position="13"/>
    </location>
    <ligand>
        <name>NAD(+)</name>
        <dbReference type="ChEBI" id="CHEBI:57540"/>
    </ligand>
</feature>
<feature type="binding site" evidence="1">
    <location>
        <position position="34"/>
    </location>
    <ligand>
        <name>NAD(+)</name>
        <dbReference type="ChEBI" id="CHEBI:57540"/>
    </ligand>
</feature>
<feature type="binding site" evidence="1">
    <location>
        <begin position="99"/>
        <end position="101"/>
    </location>
    <ligand>
        <name>NAD(+)</name>
        <dbReference type="ChEBI" id="CHEBI:57540"/>
    </ligand>
</feature>
<feature type="binding site" evidence="1">
    <location>
        <begin position="125"/>
        <end position="128"/>
    </location>
    <ligand>
        <name>NAD(+)</name>
        <dbReference type="ChEBI" id="CHEBI:57540"/>
    </ligand>
</feature>
<feature type="binding site" evidence="1">
    <location>
        <position position="158"/>
    </location>
    <ligand>
        <name>(S)-2,3,4,5-tetrahydrodipicolinate</name>
        <dbReference type="ChEBI" id="CHEBI:16845"/>
    </ligand>
</feature>
<feature type="binding site" evidence="1">
    <location>
        <begin position="167"/>
        <end position="168"/>
    </location>
    <ligand>
        <name>(S)-2,3,4,5-tetrahydrodipicolinate</name>
        <dbReference type="ChEBI" id="CHEBI:16845"/>
    </ligand>
</feature>